<comment type="subcellular location">
    <subcellularLocation>
        <location evidence="2">Cytoplasm</location>
    </subcellularLocation>
    <text>Localizes at the cell tip and the barrier septum.</text>
</comment>
<sequence>MFSGKVRAFIDEELFHSNRNNSSDGLSLDTPLAIHTPAKGFDADLSPQSLYDLHTVTTPVTPLAPDEWDFSLDQSSGVIPSPSSFLSDHNNNNLFSDDTISRQYSNTDDINPSDFGGQCAILDSQNFTLSNASTKSKWSFTKHGSNTPSDSSSPLCNSSKRVVGMLRRFLPSSRMVRLSKAHQPLRIPTTGVSLDSADLTPLSVSTSHLNHPSTSNSPDPLYSASQPPSIKTDASPVDIKNMDAAEKLKKIDLLLEEILQLDSAYDAAERRMIESGWSSVDEIRDVHNKRLDAWSEWKQKLLPLKKCC</sequence>
<evidence type="ECO:0000256" key="1">
    <source>
        <dbReference type="SAM" id="MobiDB-lite"/>
    </source>
</evidence>
<evidence type="ECO:0000269" key="2">
    <source>
    </source>
</evidence>
<name>YOFE_SCHPO</name>
<proteinExistence type="predicted"/>
<reference key="1">
    <citation type="journal article" date="2002" name="Nature">
        <title>The genome sequence of Schizosaccharomyces pombe.</title>
        <authorList>
            <person name="Wood V."/>
            <person name="Gwilliam R."/>
            <person name="Rajandream M.A."/>
            <person name="Lyne M.H."/>
            <person name="Lyne R."/>
            <person name="Stewart A."/>
            <person name="Sgouros J.G."/>
            <person name="Peat N."/>
            <person name="Hayles J."/>
            <person name="Baker S.G."/>
            <person name="Basham D."/>
            <person name="Bowman S."/>
            <person name="Brooks K."/>
            <person name="Brown D."/>
            <person name="Brown S."/>
            <person name="Chillingworth T."/>
            <person name="Churcher C.M."/>
            <person name="Collins M."/>
            <person name="Connor R."/>
            <person name="Cronin A."/>
            <person name="Davis P."/>
            <person name="Feltwell T."/>
            <person name="Fraser A."/>
            <person name="Gentles S."/>
            <person name="Goble A."/>
            <person name="Hamlin N."/>
            <person name="Harris D.E."/>
            <person name="Hidalgo J."/>
            <person name="Hodgson G."/>
            <person name="Holroyd S."/>
            <person name="Hornsby T."/>
            <person name="Howarth S."/>
            <person name="Huckle E.J."/>
            <person name="Hunt S."/>
            <person name="Jagels K."/>
            <person name="James K.D."/>
            <person name="Jones L."/>
            <person name="Jones M."/>
            <person name="Leather S."/>
            <person name="McDonald S."/>
            <person name="McLean J."/>
            <person name="Mooney P."/>
            <person name="Moule S."/>
            <person name="Mungall K.L."/>
            <person name="Murphy L.D."/>
            <person name="Niblett D."/>
            <person name="Odell C."/>
            <person name="Oliver K."/>
            <person name="O'Neil S."/>
            <person name="Pearson D."/>
            <person name="Quail M.A."/>
            <person name="Rabbinowitsch E."/>
            <person name="Rutherford K.M."/>
            <person name="Rutter S."/>
            <person name="Saunders D."/>
            <person name="Seeger K."/>
            <person name="Sharp S."/>
            <person name="Skelton J."/>
            <person name="Simmonds M.N."/>
            <person name="Squares R."/>
            <person name="Squares S."/>
            <person name="Stevens K."/>
            <person name="Taylor K."/>
            <person name="Taylor R.G."/>
            <person name="Tivey A."/>
            <person name="Walsh S.V."/>
            <person name="Warren T."/>
            <person name="Whitehead S."/>
            <person name="Woodward J.R."/>
            <person name="Volckaert G."/>
            <person name="Aert R."/>
            <person name="Robben J."/>
            <person name="Grymonprez B."/>
            <person name="Weltjens I."/>
            <person name="Vanstreels E."/>
            <person name="Rieger M."/>
            <person name="Schaefer M."/>
            <person name="Mueller-Auer S."/>
            <person name="Gabel C."/>
            <person name="Fuchs M."/>
            <person name="Duesterhoeft A."/>
            <person name="Fritzc C."/>
            <person name="Holzer E."/>
            <person name="Moestl D."/>
            <person name="Hilbert H."/>
            <person name="Borzym K."/>
            <person name="Langer I."/>
            <person name="Beck A."/>
            <person name="Lehrach H."/>
            <person name="Reinhardt R."/>
            <person name="Pohl T.M."/>
            <person name="Eger P."/>
            <person name="Zimmermann W."/>
            <person name="Wedler H."/>
            <person name="Wambutt R."/>
            <person name="Purnelle B."/>
            <person name="Goffeau A."/>
            <person name="Cadieu E."/>
            <person name="Dreano S."/>
            <person name="Gloux S."/>
            <person name="Lelaure V."/>
            <person name="Mottier S."/>
            <person name="Galibert F."/>
            <person name="Aves S.J."/>
            <person name="Xiang Z."/>
            <person name="Hunt C."/>
            <person name="Moore K."/>
            <person name="Hurst S.M."/>
            <person name="Lucas M."/>
            <person name="Rochet M."/>
            <person name="Gaillardin C."/>
            <person name="Tallada V.A."/>
            <person name="Garzon A."/>
            <person name="Thode G."/>
            <person name="Daga R.R."/>
            <person name="Cruzado L."/>
            <person name="Jimenez J."/>
            <person name="Sanchez M."/>
            <person name="del Rey F."/>
            <person name="Benito J."/>
            <person name="Dominguez A."/>
            <person name="Revuelta J.L."/>
            <person name="Moreno S."/>
            <person name="Armstrong J."/>
            <person name="Forsburg S.L."/>
            <person name="Cerutti L."/>
            <person name="Lowe T."/>
            <person name="McCombie W.R."/>
            <person name="Paulsen I."/>
            <person name="Potashkin J."/>
            <person name="Shpakovski G.V."/>
            <person name="Ussery D."/>
            <person name="Barrell B.G."/>
            <person name="Nurse P."/>
        </authorList>
    </citation>
    <scope>NUCLEOTIDE SEQUENCE [LARGE SCALE GENOMIC DNA]</scope>
    <source>
        <strain>972 / ATCC 24843</strain>
    </source>
</reference>
<reference key="2">
    <citation type="journal article" date="2006" name="Nat. Biotechnol.">
        <title>ORFeome cloning and global analysis of protein localization in the fission yeast Schizosaccharomyces pombe.</title>
        <authorList>
            <person name="Matsuyama A."/>
            <person name="Arai R."/>
            <person name="Yashiroda Y."/>
            <person name="Shirai A."/>
            <person name="Kamata A."/>
            <person name="Sekido S."/>
            <person name="Kobayashi Y."/>
            <person name="Hashimoto A."/>
            <person name="Hamamoto M."/>
            <person name="Hiraoka Y."/>
            <person name="Horinouchi S."/>
            <person name="Yoshida M."/>
        </authorList>
    </citation>
    <scope>SUBCELLULAR LOCATION [LARGE SCALE ANALYSIS]</scope>
</reference>
<keyword id="KW-0963">Cytoplasm</keyword>
<keyword id="KW-1185">Reference proteome</keyword>
<gene>
    <name type="ORF">SPBP4H10.14c</name>
</gene>
<protein>
    <recommendedName>
        <fullName>Uncharacterized protein P4H10.14c</fullName>
    </recommendedName>
</protein>
<organism>
    <name type="scientific">Schizosaccharomyces pombe (strain 972 / ATCC 24843)</name>
    <name type="common">Fission yeast</name>
    <dbReference type="NCBI Taxonomy" id="284812"/>
    <lineage>
        <taxon>Eukaryota</taxon>
        <taxon>Fungi</taxon>
        <taxon>Dikarya</taxon>
        <taxon>Ascomycota</taxon>
        <taxon>Taphrinomycotina</taxon>
        <taxon>Schizosaccharomycetes</taxon>
        <taxon>Schizosaccharomycetales</taxon>
        <taxon>Schizosaccharomycetaceae</taxon>
        <taxon>Schizosaccharomyces</taxon>
    </lineage>
</organism>
<dbReference type="EMBL" id="CU329671">
    <property type="protein sequence ID" value="CAB83172.1"/>
    <property type="molecule type" value="Genomic_DNA"/>
</dbReference>
<dbReference type="RefSeq" id="NP_596188.1">
    <property type="nucleotide sequence ID" value="NM_001022107.2"/>
</dbReference>
<dbReference type="SMR" id="Q9P7D5"/>
<dbReference type="BioGRID" id="277862">
    <property type="interactions" value="7"/>
</dbReference>
<dbReference type="iPTMnet" id="Q9P7D5"/>
<dbReference type="PaxDb" id="4896-SPBP4H10.14c.1"/>
<dbReference type="EnsemblFungi" id="SPBP4H10.14c.1">
    <property type="protein sequence ID" value="SPBP4H10.14c.1:pep"/>
    <property type="gene ID" value="SPBP4H10.14c"/>
</dbReference>
<dbReference type="KEGG" id="spo:2541351"/>
<dbReference type="PomBase" id="SPBP4H10.14c"/>
<dbReference type="VEuPathDB" id="FungiDB:SPBP4H10.14c"/>
<dbReference type="HOGENOM" id="CLU_912633_0_0_1"/>
<dbReference type="InParanoid" id="Q9P7D5"/>
<dbReference type="OMA" id="EKRMMES"/>
<dbReference type="PRO" id="PR:Q9P7D5"/>
<dbReference type="Proteomes" id="UP000002485">
    <property type="component" value="Chromosome II"/>
</dbReference>
<dbReference type="GO" id="GO:0032153">
    <property type="term" value="C:cell division site"/>
    <property type="evidence" value="ECO:0007005"/>
    <property type="project" value="PomBase"/>
</dbReference>
<dbReference type="GO" id="GO:0051286">
    <property type="term" value="C:cell tip"/>
    <property type="evidence" value="ECO:0007005"/>
    <property type="project" value="PomBase"/>
</dbReference>
<dbReference type="GO" id="GO:0005829">
    <property type="term" value="C:cytosol"/>
    <property type="evidence" value="ECO:0007005"/>
    <property type="project" value="PomBase"/>
</dbReference>
<feature type="chain" id="PRO_0000304125" description="Uncharacterized protein P4H10.14c">
    <location>
        <begin position="1"/>
        <end position="308"/>
    </location>
</feature>
<feature type="region of interest" description="Disordered" evidence="1">
    <location>
        <begin position="138"/>
        <end position="157"/>
    </location>
</feature>
<feature type="region of interest" description="Disordered" evidence="1">
    <location>
        <begin position="205"/>
        <end position="235"/>
    </location>
</feature>
<feature type="compositionally biased region" description="Polar residues" evidence="1">
    <location>
        <begin position="138"/>
        <end position="148"/>
    </location>
</feature>
<feature type="compositionally biased region" description="Polar residues" evidence="1">
    <location>
        <begin position="205"/>
        <end position="229"/>
    </location>
</feature>
<accession>Q9P7D5</accession>